<name>PAP1_ASFP4</name>
<dbReference type="EC" id="2.7.7.19"/>
<dbReference type="EMBL" id="AY261363">
    <property type="status" value="NOT_ANNOTATED_CDS"/>
    <property type="molecule type" value="Genomic_DNA"/>
</dbReference>
<dbReference type="SMR" id="P0C9D3"/>
<dbReference type="Proteomes" id="UP000000859">
    <property type="component" value="Segment"/>
</dbReference>
<dbReference type="GO" id="GO:0044423">
    <property type="term" value="C:virion component"/>
    <property type="evidence" value="ECO:0007669"/>
    <property type="project" value="UniProtKB-KW"/>
</dbReference>
<dbReference type="GO" id="GO:0005524">
    <property type="term" value="F:ATP binding"/>
    <property type="evidence" value="ECO:0007669"/>
    <property type="project" value="UniProtKB-KW"/>
</dbReference>
<dbReference type="GO" id="GO:1990817">
    <property type="term" value="F:poly(A) RNA polymerase activity"/>
    <property type="evidence" value="ECO:0007669"/>
    <property type="project" value="UniProtKB-EC"/>
</dbReference>
<dbReference type="GO" id="GO:0006397">
    <property type="term" value="P:mRNA processing"/>
    <property type="evidence" value="ECO:0007669"/>
    <property type="project" value="UniProtKB-KW"/>
</dbReference>
<dbReference type="CDD" id="cd20924">
    <property type="entry name" value="polyA_pol_Asfar"/>
    <property type="match status" value="1"/>
</dbReference>
<dbReference type="InterPro" id="IPR045355">
    <property type="entry name" value="PolyA_pol_cat_su"/>
</dbReference>
<dbReference type="Pfam" id="PF19244">
    <property type="entry name" value="Poly_A_pol_cat"/>
    <property type="match status" value="1"/>
</dbReference>
<protein>
    <recommendedName>
        <fullName evidence="1">Putative poly(A) polymerase catalytic subunit</fullName>
        <ecNumber>2.7.7.19</ecNumber>
    </recommendedName>
</protein>
<sequence length="475" mass="54736">MSSLLKTDFNVSKYRLIAQKREANAVEIEAALEVVREFIIKKKLILYGGIAIDYALHLKGSSIYPEGERPDFDMFSPNHVEDAYELADILYEKGFKQVGTVRAIHVQTMRVRTDFVWVADLSYMPPNIFDTIPTLTYKNLKIIHPDYQRAGLHLAFCFPFDNPPREDVFSRFKKDLQRYNLIEKYYPIPVVPVKSTYESKTFSIPFKQVAIHGFAAYALLYQTLNELRITCKVPEWKTEFPQPSYSYHKNDKNITLTVDMPRAYPALVLATYNPEGVIKEMGLHLTEICEPYMDYSPPIFKTNDIHFFSTMFKELAISIIQDNLIVVSPQYLLLYFLYGAFATPADKSLFLFYYNATLWILEKADSLLNIIQKQTSPEEFTRFANTSPFVLTTRVLSCSQERCTFSPAYRISLANDVQQSQLPLPKTHFLSNSLPDISTLPYNYYPGKGKEKPTNFNYEKNLLFNIGGKCTPSAM</sequence>
<accession>P0C9D3</accession>
<organism>
    <name type="scientific">African swine fever virus (isolate Tick/South Africa/Pretoriuskop Pr4/1996)</name>
    <name type="common">ASFV</name>
    <dbReference type="NCBI Taxonomy" id="561443"/>
    <lineage>
        <taxon>Viruses</taxon>
        <taxon>Varidnaviria</taxon>
        <taxon>Bamfordvirae</taxon>
        <taxon>Nucleocytoviricota</taxon>
        <taxon>Pokkesviricetes</taxon>
        <taxon>Asfuvirales</taxon>
        <taxon>Asfarviridae</taxon>
        <taxon>Asfivirus</taxon>
        <taxon>African swine fever virus</taxon>
    </lineage>
</organism>
<proteinExistence type="inferred from homology"/>
<feature type="chain" id="PRO_0000373149" description="Putative poly(A) polymerase catalytic subunit">
    <location>
        <begin position="1"/>
        <end position="475"/>
    </location>
</feature>
<comment type="function">
    <text evidence="2">Polymerase that creates the 3'-poly(A) tail of mRNA's.</text>
</comment>
<comment type="catalytic activity">
    <reaction>
        <text>RNA(n) + ATP = RNA(n)-3'-adenine ribonucleotide + diphosphate</text>
        <dbReference type="Rhea" id="RHEA:11332"/>
        <dbReference type="Rhea" id="RHEA-COMP:14527"/>
        <dbReference type="Rhea" id="RHEA-COMP:17347"/>
        <dbReference type="ChEBI" id="CHEBI:30616"/>
        <dbReference type="ChEBI" id="CHEBI:33019"/>
        <dbReference type="ChEBI" id="CHEBI:140395"/>
        <dbReference type="ChEBI" id="CHEBI:173115"/>
        <dbReference type="EC" id="2.7.7.19"/>
    </reaction>
</comment>
<comment type="subcellular location">
    <subcellularLocation>
        <location evidence="1">Virion</location>
    </subcellularLocation>
</comment>
<comment type="induction">
    <text evidence="2">Expressed in the late phase of the viral replicative cycle.</text>
</comment>
<comment type="similarity">
    <text evidence="2">Belongs to the poxviridae poly(A) polymerase catalytic subunit family. Highly divergent.</text>
</comment>
<keyword id="KW-0067">ATP-binding</keyword>
<keyword id="KW-0426">Late protein</keyword>
<keyword id="KW-0507">mRNA processing</keyword>
<keyword id="KW-0547">Nucleotide-binding</keyword>
<keyword id="KW-0804">Transcription</keyword>
<keyword id="KW-0808">Transferase</keyword>
<keyword id="KW-0946">Virion</keyword>
<evidence type="ECO:0000250" key="1">
    <source>
        <dbReference type="UniProtKB" id="Q65159"/>
    </source>
</evidence>
<evidence type="ECO:0000305" key="2"/>
<reference key="1">
    <citation type="submission" date="2003-03" db="EMBL/GenBank/DDBJ databases">
        <title>African swine fever virus genomes.</title>
        <authorList>
            <person name="Kutish G.F."/>
            <person name="Rock D.L."/>
        </authorList>
    </citation>
    <scope>NUCLEOTIDE SEQUENCE [LARGE SCALE GENOMIC DNA]</scope>
</reference>
<organismHost>
    <name type="scientific">Ornithodoros</name>
    <name type="common">relapsing fever ticks</name>
    <dbReference type="NCBI Taxonomy" id="6937"/>
</organismHost>
<organismHost>
    <name type="scientific">Phacochoerus aethiopicus</name>
    <name type="common">Warthog</name>
    <dbReference type="NCBI Taxonomy" id="85517"/>
</organismHost>
<organismHost>
    <name type="scientific">Phacochoerus africanus</name>
    <name type="common">Warthog</name>
    <dbReference type="NCBI Taxonomy" id="41426"/>
</organismHost>
<organismHost>
    <name type="scientific">Potamochoerus larvatus</name>
    <name type="common">Bushpig</name>
    <dbReference type="NCBI Taxonomy" id="273792"/>
</organismHost>
<organismHost>
    <name type="scientific">Sus scrofa</name>
    <name type="common">Pig</name>
    <dbReference type="NCBI Taxonomy" id="9823"/>
</organismHost>
<gene>
    <name type="ordered locus">Pret-079</name>
</gene>